<sequence>MGRDTILEIINSIRNADRGRKRVVRITSTNITENFVKILFIEGFIENARKHREKNKYYFTLTLRHRRNSKRPYINILNLKRISRPGLRIYSNSQQIPLILGGIGIVILYTSRGIMTDREARLKGIGGELLCYIW</sequence>
<reference key="1">
    <citation type="journal article" date="1992" name="Proc. Natl. Acad. Sci. U.S.A.">
        <title>Function and evolution of a minimal plastid genome from a nonphotosynthetic parasitic plant.</title>
        <authorList>
            <person name="Wolfe K.H."/>
            <person name="Morden C.W."/>
            <person name="Palmer J.D."/>
        </authorList>
    </citation>
    <scope>NUCLEOTIDE SEQUENCE [LARGE SCALE GENOMIC DNA]</scope>
</reference>
<reference key="2">
    <citation type="journal article" date="1992" name="J. Mol. Evol.">
        <title>Rapid evolution of the plastid translational apparatus in a nonphotosynthetic plant: loss or accelerated sequence evolution of tRNA and ribosomal protein genes.</title>
        <authorList>
            <person name="Wolfe K.H."/>
            <person name="Morden C.W."/>
            <person name="Ems S.C."/>
            <person name="Palmer J.D."/>
        </authorList>
    </citation>
    <scope>NUCLEOTIDE SEQUENCE [GENOMIC DNA]</scope>
</reference>
<protein>
    <recommendedName>
        <fullName evidence="2">Small ribosomal subunit protein uS8c</fullName>
    </recommendedName>
    <alternativeName>
        <fullName>30S ribosomal protein S8, plastid</fullName>
    </alternativeName>
</protein>
<geneLocation type="non-photosynthetic plastid"/>
<organism>
    <name type="scientific">Epifagus virginiana</name>
    <name type="common">Beechdrops</name>
    <name type="synonym">Orobanche virginiana</name>
    <dbReference type="NCBI Taxonomy" id="4177"/>
    <lineage>
        <taxon>Eukaryota</taxon>
        <taxon>Viridiplantae</taxon>
        <taxon>Streptophyta</taxon>
        <taxon>Embryophyta</taxon>
        <taxon>Tracheophyta</taxon>
        <taxon>Spermatophyta</taxon>
        <taxon>Magnoliopsida</taxon>
        <taxon>eudicotyledons</taxon>
        <taxon>Gunneridae</taxon>
        <taxon>Pentapetalae</taxon>
        <taxon>asterids</taxon>
        <taxon>lamiids</taxon>
        <taxon>Lamiales</taxon>
        <taxon>Orobanchaceae</taxon>
        <taxon>Orobancheae</taxon>
        <taxon>Epifagus</taxon>
    </lineage>
</organism>
<feature type="chain" id="PRO_0000126569" description="Small ribosomal subunit protein uS8c">
    <location>
        <begin position="1"/>
        <end position="134"/>
    </location>
</feature>
<keyword id="KW-0934">Plastid</keyword>
<keyword id="KW-0687">Ribonucleoprotein</keyword>
<keyword id="KW-0689">Ribosomal protein</keyword>
<keyword id="KW-0694">RNA-binding</keyword>
<keyword id="KW-0699">rRNA-binding</keyword>
<accession>P30058</accession>
<proteinExistence type="inferred from homology"/>
<evidence type="ECO:0000250" key="1"/>
<evidence type="ECO:0000305" key="2"/>
<gene>
    <name type="primary">rps8</name>
</gene>
<dbReference type="EMBL" id="M81884">
    <property type="protein sequence ID" value="AAA65862.1"/>
    <property type="molecule type" value="Genomic_DNA"/>
</dbReference>
<dbReference type="PIR" id="S78393">
    <property type="entry name" value="S78393"/>
</dbReference>
<dbReference type="RefSeq" id="NP_054388.1">
    <property type="nucleotide sequence ID" value="NC_001568.1"/>
</dbReference>
<dbReference type="SMR" id="P30058"/>
<dbReference type="GeneID" id="801397"/>
<dbReference type="GO" id="GO:0009536">
    <property type="term" value="C:plastid"/>
    <property type="evidence" value="ECO:0007669"/>
    <property type="project" value="UniProtKB-SubCell"/>
</dbReference>
<dbReference type="GO" id="GO:1990904">
    <property type="term" value="C:ribonucleoprotein complex"/>
    <property type="evidence" value="ECO:0007669"/>
    <property type="project" value="UniProtKB-KW"/>
</dbReference>
<dbReference type="GO" id="GO:0005840">
    <property type="term" value="C:ribosome"/>
    <property type="evidence" value="ECO:0007669"/>
    <property type="project" value="UniProtKB-KW"/>
</dbReference>
<dbReference type="GO" id="GO:0019843">
    <property type="term" value="F:rRNA binding"/>
    <property type="evidence" value="ECO:0007669"/>
    <property type="project" value="UniProtKB-KW"/>
</dbReference>
<dbReference type="GO" id="GO:0003735">
    <property type="term" value="F:structural constituent of ribosome"/>
    <property type="evidence" value="ECO:0007669"/>
    <property type="project" value="InterPro"/>
</dbReference>
<dbReference type="GO" id="GO:0006412">
    <property type="term" value="P:translation"/>
    <property type="evidence" value="ECO:0007669"/>
    <property type="project" value="InterPro"/>
</dbReference>
<dbReference type="FunFam" id="3.30.1490.10:FF:000001">
    <property type="entry name" value="30S ribosomal protein S8"/>
    <property type="match status" value="1"/>
</dbReference>
<dbReference type="Gene3D" id="3.30.1370.30">
    <property type="match status" value="1"/>
</dbReference>
<dbReference type="Gene3D" id="3.30.1490.10">
    <property type="match status" value="1"/>
</dbReference>
<dbReference type="HAMAP" id="MF_01302_B">
    <property type="entry name" value="Ribosomal_uS8_B"/>
    <property type="match status" value="1"/>
</dbReference>
<dbReference type="InterPro" id="IPR000630">
    <property type="entry name" value="Ribosomal_uS8"/>
</dbReference>
<dbReference type="InterPro" id="IPR047863">
    <property type="entry name" value="Ribosomal_uS8_CS"/>
</dbReference>
<dbReference type="InterPro" id="IPR035987">
    <property type="entry name" value="Ribosomal_uS8_sf"/>
</dbReference>
<dbReference type="NCBIfam" id="NF001109">
    <property type="entry name" value="PRK00136.1"/>
    <property type="match status" value="1"/>
</dbReference>
<dbReference type="PANTHER" id="PTHR11758">
    <property type="entry name" value="40S RIBOSOMAL PROTEIN S15A"/>
    <property type="match status" value="1"/>
</dbReference>
<dbReference type="Pfam" id="PF00410">
    <property type="entry name" value="Ribosomal_S8"/>
    <property type="match status" value="1"/>
</dbReference>
<dbReference type="SUPFAM" id="SSF56047">
    <property type="entry name" value="Ribosomal protein S8"/>
    <property type="match status" value="1"/>
</dbReference>
<dbReference type="PROSITE" id="PS00053">
    <property type="entry name" value="RIBOSOMAL_S8"/>
    <property type="match status" value="1"/>
</dbReference>
<name>RR8_EPIVI</name>
<comment type="function">
    <text evidence="1">One of the primary rRNA binding proteins, it binds directly to 16S rRNA central domain where it helps coordinate assembly of the platform of the 30S subunit.</text>
</comment>
<comment type="subunit">
    <text evidence="1">Part of the 30S ribosomal subunit.</text>
</comment>
<comment type="subcellular location">
    <subcellularLocation>
        <location>Plastid</location>
    </subcellularLocation>
</comment>
<comment type="similarity">
    <text evidence="2">Belongs to the universal ribosomal protein uS8 family.</text>
</comment>